<accession>Q9SA23</accession>
<protein>
    <recommendedName>
        <fullName>Syntaxin-51</fullName>
        <shortName>AtSYP51</shortName>
    </recommendedName>
</protein>
<feature type="chain" id="PRO_0000210261" description="Syntaxin-51">
    <location>
        <begin position="1"/>
        <end position="232"/>
    </location>
</feature>
<feature type="topological domain" description="Cytoplasmic" evidence="2">
    <location>
        <begin position="1"/>
        <end position="208"/>
    </location>
</feature>
<feature type="transmembrane region" description="Helical; Anchor for type IV membrane protein" evidence="2">
    <location>
        <begin position="209"/>
        <end position="229"/>
    </location>
</feature>
<feature type="topological domain" description="Vesicular" evidence="2">
    <location>
        <begin position="230"/>
        <end position="232"/>
    </location>
</feature>
<feature type="domain" description="t-SNARE coiled-coil homology" evidence="3">
    <location>
        <begin position="136"/>
        <end position="198"/>
    </location>
</feature>
<reference key="1">
    <citation type="journal article" date="2001" name="Mol. Biol. Cell">
        <title>Interactions between syntaxins identify at least five SNARE complexes within the Golgi/prevacuolar system of the Arabidopsis cell.</title>
        <authorList>
            <person name="Sanderfoot A.A."/>
            <person name="Kovaleva V."/>
            <person name="Bassham D.C."/>
            <person name="Raikhel N.V."/>
        </authorList>
    </citation>
    <scope>NUCLEOTIDE SEQUENCE [MRNA]</scope>
    <scope>INTERACTION WITH SYP21; SYP22; SYP61; VTI11 AND VTI12</scope>
</reference>
<reference key="2">
    <citation type="journal article" date="2000" name="Nature">
        <title>Sequence and analysis of chromosome 1 of the plant Arabidopsis thaliana.</title>
        <authorList>
            <person name="Theologis A."/>
            <person name="Ecker J.R."/>
            <person name="Palm C.J."/>
            <person name="Federspiel N.A."/>
            <person name="Kaul S."/>
            <person name="White O."/>
            <person name="Alonso J."/>
            <person name="Altafi H."/>
            <person name="Araujo R."/>
            <person name="Bowman C.L."/>
            <person name="Brooks S.Y."/>
            <person name="Buehler E."/>
            <person name="Chan A."/>
            <person name="Chao Q."/>
            <person name="Chen H."/>
            <person name="Cheuk R.F."/>
            <person name="Chin C.W."/>
            <person name="Chung M.K."/>
            <person name="Conn L."/>
            <person name="Conway A.B."/>
            <person name="Conway A.R."/>
            <person name="Creasy T.H."/>
            <person name="Dewar K."/>
            <person name="Dunn P."/>
            <person name="Etgu P."/>
            <person name="Feldblyum T.V."/>
            <person name="Feng J.-D."/>
            <person name="Fong B."/>
            <person name="Fujii C.Y."/>
            <person name="Gill J.E."/>
            <person name="Goldsmith A.D."/>
            <person name="Haas B."/>
            <person name="Hansen N.F."/>
            <person name="Hughes B."/>
            <person name="Huizar L."/>
            <person name="Hunter J.L."/>
            <person name="Jenkins J."/>
            <person name="Johnson-Hopson C."/>
            <person name="Khan S."/>
            <person name="Khaykin E."/>
            <person name="Kim C.J."/>
            <person name="Koo H.L."/>
            <person name="Kremenetskaia I."/>
            <person name="Kurtz D.B."/>
            <person name="Kwan A."/>
            <person name="Lam B."/>
            <person name="Langin-Hooper S."/>
            <person name="Lee A."/>
            <person name="Lee J.M."/>
            <person name="Lenz C.A."/>
            <person name="Li J.H."/>
            <person name="Li Y.-P."/>
            <person name="Lin X."/>
            <person name="Liu S.X."/>
            <person name="Liu Z.A."/>
            <person name="Luros J.S."/>
            <person name="Maiti R."/>
            <person name="Marziali A."/>
            <person name="Militscher J."/>
            <person name="Miranda M."/>
            <person name="Nguyen M."/>
            <person name="Nierman W.C."/>
            <person name="Osborne B.I."/>
            <person name="Pai G."/>
            <person name="Peterson J."/>
            <person name="Pham P.K."/>
            <person name="Rizzo M."/>
            <person name="Rooney T."/>
            <person name="Rowley D."/>
            <person name="Sakano H."/>
            <person name="Salzberg S.L."/>
            <person name="Schwartz J.R."/>
            <person name="Shinn P."/>
            <person name="Southwick A.M."/>
            <person name="Sun H."/>
            <person name="Tallon L.J."/>
            <person name="Tambunga G."/>
            <person name="Toriumi M.J."/>
            <person name="Town C.D."/>
            <person name="Utterback T."/>
            <person name="Van Aken S."/>
            <person name="Vaysberg M."/>
            <person name="Vysotskaia V.S."/>
            <person name="Walker M."/>
            <person name="Wu D."/>
            <person name="Yu G."/>
            <person name="Fraser C.M."/>
            <person name="Venter J.C."/>
            <person name="Davis R.W."/>
        </authorList>
    </citation>
    <scope>NUCLEOTIDE SEQUENCE [LARGE SCALE GENOMIC DNA]</scope>
    <source>
        <strain>cv. Columbia</strain>
    </source>
</reference>
<reference key="3">
    <citation type="journal article" date="2017" name="Plant J.">
        <title>Araport11: a complete reannotation of the Arabidopsis thaliana reference genome.</title>
        <authorList>
            <person name="Cheng C.Y."/>
            <person name="Krishnakumar V."/>
            <person name="Chan A.P."/>
            <person name="Thibaud-Nissen F."/>
            <person name="Schobel S."/>
            <person name="Town C.D."/>
        </authorList>
    </citation>
    <scope>GENOME REANNOTATION</scope>
    <source>
        <strain>cv. Columbia</strain>
    </source>
</reference>
<reference key="4">
    <citation type="journal article" date="2003" name="Science">
        <title>Empirical analysis of transcriptional activity in the Arabidopsis genome.</title>
        <authorList>
            <person name="Yamada K."/>
            <person name="Lim J."/>
            <person name="Dale J.M."/>
            <person name="Chen H."/>
            <person name="Shinn P."/>
            <person name="Palm C.J."/>
            <person name="Southwick A.M."/>
            <person name="Wu H.C."/>
            <person name="Kim C.J."/>
            <person name="Nguyen M."/>
            <person name="Pham P.K."/>
            <person name="Cheuk R.F."/>
            <person name="Karlin-Newmann G."/>
            <person name="Liu S.X."/>
            <person name="Lam B."/>
            <person name="Sakano H."/>
            <person name="Wu T."/>
            <person name="Yu G."/>
            <person name="Miranda M."/>
            <person name="Quach H.L."/>
            <person name="Tripp M."/>
            <person name="Chang C.H."/>
            <person name="Lee J.M."/>
            <person name="Toriumi M.J."/>
            <person name="Chan M.M."/>
            <person name="Tang C.C."/>
            <person name="Onodera C.S."/>
            <person name="Deng J.M."/>
            <person name="Akiyama K."/>
            <person name="Ansari Y."/>
            <person name="Arakawa T."/>
            <person name="Banh J."/>
            <person name="Banno F."/>
            <person name="Bowser L."/>
            <person name="Brooks S.Y."/>
            <person name="Carninci P."/>
            <person name="Chao Q."/>
            <person name="Choy N."/>
            <person name="Enju A."/>
            <person name="Goldsmith A.D."/>
            <person name="Gurjal M."/>
            <person name="Hansen N.F."/>
            <person name="Hayashizaki Y."/>
            <person name="Johnson-Hopson C."/>
            <person name="Hsuan V.W."/>
            <person name="Iida K."/>
            <person name="Karnes M."/>
            <person name="Khan S."/>
            <person name="Koesema E."/>
            <person name="Ishida J."/>
            <person name="Jiang P.X."/>
            <person name="Jones T."/>
            <person name="Kawai J."/>
            <person name="Kamiya A."/>
            <person name="Meyers C."/>
            <person name="Nakajima M."/>
            <person name="Narusaka M."/>
            <person name="Seki M."/>
            <person name="Sakurai T."/>
            <person name="Satou M."/>
            <person name="Tamse R."/>
            <person name="Vaysberg M."/>
            <person name="Wallender E.K."/>
            <person name="Wong C."/>
            <person name="Yamamura Y."/>
            <person name="Yuan S."/>
            <person name="Shinozaki K."/>
            <person name="Davis R.W."/>
            <person name="Theologis A."/>
            <person name="Ecker J.R."/>
        </authorList>
    </citation>
    <scope>NUCLEOTIDE SEQUENCE [LARGE SCALE MRNA]</scope>
    <source>
        <strain>cv. Columbia</strain>
    </source>
</reference>
<reference key="5">
    <citation type="submission" date="2002-03" db="EMBL/GenBank/DDBJ databases">
        <title>Full-length cDNA from Arabidopsis thaliana.</title>
        <authorList>
            <person name="Brover V.V."/>
            <person name="Troukhan M.E."/>
            <person name="Alexandrov N.A."/>
            <person name="Lu Y.-P."/>
            <person name="Flavell R.B."/>
            <person name="Feldmann K.A."/>
        </authorList>
    </citation>
    <scope>NUCLEOTIDE SEQUENCE [LARGE SCALE MRNA]</scope>
</reference>
<dbReference type="EMBL" id="AF355755">
    <property type="protein sequence ID" value="AAK40223.1"/>
    <property type="molecule type" value="mRNA"/>
</dbReference>
<dbReference type="EMBL" id="AC006341">
    <property type="protein sequence ID" value="AAD34675.1"/>
    <property type="molecule type" value="Genomic_DNA"/>
</dbReference>
<dbReference type="EMBL" id="CP002684">
    <property type="protein sequence ID" value="AEE29423.1"/>
    <property type="molecule type" value="Genomic_DNA"/>
</dbReference>
<dbReference type="EMBL" id="CP002684">
    <property type="protein sequence ID" value="AEE29424.1"/>
    <property type="molecule type" value="Genomic_DNA"/>
</dbReference>
<dbReference type="EMBL" id="CP002684">
    <property type="protein sequence ID" value="ANM60981.1"/>
    <property type="molecule type" value="Genomic_DNA"/>
</dbReference>
<dbReference type="EMBL" id="AY074863">
    <property type="protein sequence ID" value="AAL75885.1"/>
    <property type="molecule type" value="mRNA"/>
</dbReference>
<dbReference type="EMBL" id="AY097382">
    <property type="protein sequence ID" value="AAM19898.1"/>
    <property type="molecule type" value="mRNA"/>
</dbReference>
<dbReference type="EMBL" id="AY085320">
    <property type="protein sequence ID" value="AAM62551.1"/>
    <property type="molecule type" value="mRNA"/>
</dbReference>
<dbReference type="PIR" id="C86297">
    <property type="entry name" value="C86297"/>
</dbReference>
<dbReference type="RefSeq" id="NP_001031054.1">
    <molecule id="Q9SA23-1"/>
    <property type="nucleotide sequence ID" value="NM_001035977.1"/>
</dbReference>
<dbReference type="RefSeq" id="NP_001323228.1">
    <molecule id="Q9SA23-1"/>
    <property type="nucleotide sequence ID" value="NM_001332216.1"/>
</dbReference>
<dbReference type="RefSeq" id="NP_563994.1">
    <molecule id="Q9SA23-1"/>
    <property type="nucleotide sequence ID" value="NM_101490.4"/>
</dbReference>
<dbReference type="SMR" id="Q9SA23"/>
<dbReference type="BioGRID" id="23433">
    <property type="interactions" value="6"/>
</dbReference>
<dbReference type="FunCoup" id="Q9SA23">
    <property type="interactions" value="3759"/>
</dbReference>
<dbReference type="IntAct" id="Q9SA23">
    <property type="interactions" value="9"/>
</dbReference>
<dbReference type="STRING" id="3702.Q9SA23"/>
<dbReference type="SwissPalm" id="Q9SA23"/>
<dbReference type="PaxDb" id="3702-AT1G16240.1"/>
<dbReference type="ProteomicsDB" id="233064">
    <molecule id="Q9SA23-1"/>
</dbReference>
<dbReference type="EnsemblPlants" id="AT1G16240.1">
    <molecule id="Q9SA23-1"/>
    <property type="protein sequence ID" value="AT1G16240.1"/>
    <property type="gene ID" value="AT1G16240"/>
</dbReference>
<dbReference type="EnsemblPlants" id="AT1G16240.2">
    <molecule id="Q9SA23-1"/>
    <property type="protein sequence ID" value="AT1G16240.2"/>
    <property type="gene ID" value="AT1G16240"/>
</dbReference>
<dbReference type="EnsemblPlants" id="AT1G16240.4">
    <molecule id="Q9SA23-1"/>
    <property type="protein sequence ID" value="AT1G16240.4"/>
    <property type="gene ID" value="AT1G16240"/>
</dbReference>
<dbReference type="GeneID" id="838193"/>
<dbReference type="Gramene" id="AT1G16240.1">
    <molecule id="Q9SA23-1"/>
    <property type="protein sequence ID" value="AT1G16240.1"/>
    <property type="gene ID" value="AT1G16240"/>
</dbReference>
<dbReference type="Gramene" id="AT1G16240.2">
    <molecule id="Q9SA23-1"/>
    <property type="protein sequence ID" value="AT1G16240.2"/>
    <property type="gene ID" value="AT1G16240"/>
</dbReference>
<dbReference type="Gramene" id="AT1G16240.4">
    <molecule id="Q9SA23-1"/>
    <property type="protein sequence ID" value="AT1G16240.4"/>
    <property type="gene ID" value="AT1G16240"/>
</dbReference>
<dbReference type="KEGG" id="ath:AT1G16240"/>
<dbReference type="Araport" id="AT1G16240"/>
<dbReference type="TAIR" id="AT1G16240">
    <property type="gene designation" value="SYP51"/>
</dbReference>
<dbReference type="eggNOG" id="KOG3202">
    <property type="taxonomic scope" value="Eukaryota"/>
</dbReference>
<dbReference type="HOGENOM" id="CLU_074236_0_0_1"/>
<dbReference type="InParanoid" id="Q9SA23"/>
<dbReference type="OMA" id="DSTCYIA"/>
<dbReference type="OrthoDB" id="428895at2759"/>
<dbReference type="PhylomeDB" id="Q9SA23"/>
<dbReference type="PRO" id="PR:Q9SA23"/>
<dbReference type="Proteomes" id="UP000006548">
    <property type="component" value="Chromosome 1"/>
</dbReference>
<dbReference type="ExpressionAtlas" id="Q9SA23">
    <property type="expression patterns" value="baseline and differential"/>
</dbReference>
<dbReference type="GO" id="GO:0010008">
    <property type="term" value="C:endosome membrane"/>
    <property type="evidence" value="ECO:0000304"/>
    <property type="project" value="TAIR"/>
</dbReference>
<dbReference type="GO" id="GO:0005794">
    <property type="term" value="C:Golgi apparatus"/>
    <property type="evidence" value="ECO:0007669"/>
    <property type="project" value="UniProtKB-SubCell"/>
</dbReference>
<dbReference type="GO" id="GO:0005634">
    <property type="term" value="C:nucleus"/>
    <property type="evidence" value="ECO:0007005"/>
    <property type="project" value="TAIR"/>
</dbReference>
<dbReference type="GO" id="GO:0000325">
    <property type="term" value="C:plant-type vacuole"/>
    <property type="evidence" value="ECO:0007005"/>
    <property type="project" value="TAIR"/>
</dbReference>
<dbReference type="GO" id="GO:0005773">
    <property type="term" value="C:vacuole"/>
    <property type="evidence" value="ECO:0007005"/>
    <property type="project" value="TAIR"/>
</dbReference>
<dbReference type="GO" id="GO:0005484">
    <property type="term" value="F:SNAP receptor activity"/>
    <property type="evidence" value="ECO:0000304"/>
    <property type="project" value="TAIR"/>
</dbReference>
<dbReference type="GO" id="GO:0006886">
    <property type="term" value="P:intracellular protein transport"/>
    <property type="evidence" value="ECO:0007669"/>
    <property type="project" value="InterPro"/>
</dbReference>
<dbReference type="GO" id="GO:0016192">
    <property type="term" value="P:vesicle-mediated transport"/>
    <property type="evidence" value="ECO:0000304"/>
    <property type="project" value="TAIR"/>
</dbReference>
<dbReference type="CDD" id="cd15841">
    <property type="entry name" value="SNARE_Qc"/>
    <property type="match status" value="1"/>
</dbReference>
<dbReference type="FunFam" id="1.20.5.110:FF:000030">
    <property type="entry name" value="syntaxin-51 isoform X2"/>
    <property type="match status" value="1"/>
</dbReference>
<dbReference type="Gene3D" id="1.20.5.110">
    <property type="match status" value="1"/>
</dbReference>
<dbReference type="InterPro" id="IPR045242">
    <property type="entry name" value="Syntaxin"/>
</dbReference>
<dbReference type="InterPro" id="IPR006012">
    <property type="entry name" value="Syntaxin/epimorphin_CS"/>
</dbReference>
<dbReference type="InterPro" id="IPR000727">
    <property type="entry name" value="T_SNARE_dom"/>
</dbReference>
<dbReference type="PANTHER" id="PTHR19957">
    <property type="entry name" value="SYNTAXIN"/>
    <property type="match status" value="1"/>
</dbReference>
<dbReference type="PANTHER" id="PTHR19957:SF285">
    <property type="entry name" value="SYNTAXIN-51-RELATED"/>
    <property type="match status" value="1"/>
</dbReference>
<dbReference type="Pfam" id="PF05739">
    <property type="entry name" value="SNARE"/>
    <property type="match status" value="1"/>
</dbReference>
<dbReference type="SMART" id="SM00397">
    <property type="entry name" value="t_SNARE"/>
    <property type="match status" value="1"/>
</dbReference>
<dbReference type="SUPFAM" id="SSF58038">
    <property type="entry name" value="SNARE fusion complex"/>
    <property type="match status" value="1"/>
</dbReference>
<dbReference type="PROSITE" id="PS00914">
    <property type="entry name" value="SYNTAXIN"/>
    <property type="match status" value="1"/>
</dbReference>
<dbReference type="PROSITE" id="PS50192">
    <property type="entry name" value="T_SNARE"/>
    <property type="match status" value="1"/>
</dbReference>
<comment type="function">
    <text evidence="1">Vesicle trafficking protein that functions in the secretory pathway.</text>
</comment>
<comment type="subunit">
    <text evidence="4">Interacts with VTI11 and either SYP21, or SYP22, or SYP61 in the prevacuolar compartment, or with VTI12 and SYP61 in the trans-Golgi network to form t-SNARE complexes.</text>
</comment>
<comment type="interaction">
    <interactant intactId="EBI-4436558">
        <id>Q9SA23</id>
    </interactant>
    <interactant intactId="EBI-4438441">
        <id>Q946Y7</id>
        <label>SYP61</label>
    </interactant>
    <organismsDiffer>false</organismsDiffer>
    <experiments>2</experiments>
</comment>
<comment type="subcellular location">
    <subcellularLocation>
        <location>Golgi apparatus</location>
        <location>trans-Golgi network membrane</location>
        <topology>Single-pass type IV membrane protein</topology>
    </subcellularLocation>
    <subcellularLocation>
        <location>Prevacuolar compartment membrane</location>
        <topology>Single-pass type IV membrane protein</topology>
    </subcellularLocation>
</comment>
<comment type="alternative products">
    <event type="alternative splicing"/>
    <isoform>
        <id>Q9SA23-1</id>
        <name>1</name>
        <sequence type="displayed"/>
    </isoform>
    <text>A number of isoforms are produced. According to EST sequences.</text>
</comment>
<comment type="tissue specificity">
    <text>Expressed in root, leaf, stem, flower and silique.</text>
</comment>
<comment type="miscellaneous">
    <text>SYP51 and SYP52 may have redundant functions. The exact location of the SYP51/SYP61 complex is unclear, but is probably on the trans-Golgi network because of the likelihood of containing chiefly VTI12.</text>
</comment>
<comment type="similarity">
    <text evidence="5">Belongs to the syntaxin family.</text>
</comment>
<name>SYP51_ARATH</name>
<proteinExistence type="evidence at protein level"/>
<evidence type="ECO:0000250" key="1"/>
<evidence type="ECO:0000255" key="2"/>
<evidence type="ECO:0000255" key="3">
    <source>
        <dbReference type="PROSITE-ProRule" id="PRU00202"/>
    </source>
</evidence>
<evidence type="ECO:0000269" key="4">
    <source>
    </source>
</evidence>
<evidence type="ECO:0000305" key="5"/>
<organism>
    <name type="scientific">Arabidopsis thaliana</name>
    <name type="common">Mouse-ear cress</name>
    <dbReference type="NCBI Taxonomy" id="3702"/>
    <lineage>
        <taxon>Eukaryota</taxon>
        <taxon>Viridiplantae</taxon>
        <taxon>Streptophyta</taxon>
        <taxon>Embryophyta</taxon>
        <taxon>Tracheophyta</taxon>
        <taxon>Spermatophyta</taxon>
        <taxon>Magnoliopsida</taxon>
        <taxon>eudicotyledons</taxon>
        <taxon>Gunneridae</taxon>
        <taxon>Pentapetalae</taxon>
        <taxon>rosids</taxon>
        <taxon>malvids</taxon>
        <taxon>Brassicales</taxon>
        <taxon>Brassicaceae</taxon>
        <taxon>Camelineae</taxon>
        <taxon>Arabidopsis</taxon>
    </lineage>
</organism>
<sequence length="232" mass="25889">MASSSDSWMRAYNEALKLSEEINGMISERSSSAVTGPDAQRRASAIRRKITIFGNKLDSLQSLLAEIHGKPISEKEMNRRKDMVGNLRSKANQMANALNMSNFANRDSLLGPDIKPDDSMSRVTGMDNQGIVGYQRQVMREQDEGLEQLEGTVMSTKHIALAVSEELDLQTRLIDDLDYHVDVTDSRLRRVQKSLAVMNKNMRSGCSCMSMLLSVLGIVGLAVVIWMLVKYM</sequence>
<keyword id="KW-0025">Alternative splicing</keyword>
<keyword id="KW-0175">Coiled coil</keyword>
<keyword id="KW-0333">Golgi apparatus</keyword>
<keyword id="KW-0472">Membrane</keyword>
<keyword id="KW-0653">Protein transport</keyword>
<keyword id="KW-1185">Reference proteome</keyword>
<keyword id="KW-0812">Transmembrane</keyword>
<keyword id="KW-1133">Transmembrane helix</keyword>
<keyword id="KW-0813">Transport</keyword>
<gene>
    <name type="primary">SYP51</name>
    <name type="ordered locus">At1g16240</name>
    <name type="ORF">F3O9.4</name>
</gene>